<keyword id="KW-0963">Cytoplasm</keyword>
<keyword id="KW-0324">Glycolysis</keyword>
<keyword id="KW-0520">NAD</keyword>
<keyword id="KW-0547">Nucleotide-binding</keyword>
<keyword id="KW-0560">Oxidoreductase</keyword>
<keyword id="KW-1185">Reference proteome</keyword>
<feature type="chain" id="PRO_0000145673" description="Glyceraldehyde-3-phosphate dehydrogenase">
    <location>
        <begin position="1"/>
        <end position="334"/>
    </location>
</feature>
<feature type="active site" description="Nucleophile" evidence="1">
    <location>
        <position position="154"/>
    </location>
</feature>
<feature type="binding site" evidence="1">
    <location>
        <begin position="12"/>
        <end position="13"/>
    </location>
    <ligand>
        <name>NAD(+)</name>
        <dbReference type="ChEBI" id="CHEBI:57540"/>
    </ligand>
</feature>
<feature type="binding site" evidence="1">
    <location>
        <position position="37"/>
    </location>
    <ligand>
        <name>NAD(+)</name>
        <dbReference type="ChEBI" id="CHEBI:57540"/>
    </ligand>
</feature>
<feature type="binding site" evidence="1">
    <location>
        <position position="81"/>
    </location>
    <ligand>
        <name>NAD(+)</name>
        <dbReference type="ChEBI" id="CHEBI:57540"/>
    </ligand>
</feature>
<feature type="binding site" evidence="1">
    <location>
        <position position="123"/>
    </location>
    <ligand>
        <name>NAD(+)</name>
        <dbReference type="ChEBI" id="CHEBI:57540"/>
    </ligand>
</feature>
<feature type="binding site" evidence="1">
    <location>
        <begin position="153"/>
        <end position="155"/>
    </location>
    <ligand>
        <name>D-glyceraldehyde 3-phosphate</name>
        <dbReference type="ChEBI" id="CHEBI:59776"/>
    </ligand>
</feature>
<feature type="binding site" evidence="1">
    <location>
        <position position="184"/>
    </location>
    <ligand>
        <name>D-glyceraldehyde 3-phosphate</name>
        <dbReference type="ChEBI" id="CHEBI:59776"/>
    </ligand>
</feature>
<feature type="binding site" evidence="1">
    <location>
        <position position="185"/>
    </location>
    <ligand>
        <name>NAD(+)</name>
        <dbReference type="ChEBI" id="CHEBI:57540"/>
    </ligand>
</feature>
<feature type="binding site" evidence="1">
    <location>
        <position position="199"/>
    </location>
    <ligand>
        <name>D-glyceraldehyde 3-phosphate</name>
        <dbReference type="ChEBI" id="CHEBI:59776"/>
    </ligand>
</feature>
<feature type="binding site" evidence="1">
    <location>
        <begin position="212"/>
        <end position="213"/>
    </location>
    <ligand>
        <name>D-glyceraldehyde 3-phosphate</name>
        <dbReference type="ChEBI" id="CHEBI:59776"/>
    </ligand>
</feature>
<feature type="binding site" evidence="1">
    <location>
        <position position="235"/>
    </location>
    <ligand>
        <name>D-glyceraldehyde 3-phosphate</name>
        <dbReference type="ChEBI" id="CHEBI:59776"/>
    </ligand>
</feature>
<feature type="binding site" evidence="1">
    <location>
        <position position="314"/>
    </location>
    <ligand>
        <name>NAD(+)</name>
        <dbReference type="ChEBI" id="CHEBI:57540"/>
    </ligand>
</feature>
<feature type="site" description="Activates thiol group during catalysis" evidence="1">
    <location>
        <position position="181"/>
    </location>
</feature>
<feature type="sequence conflict" description="In Ref. 1; AAA03488." evidence="2" ref="1">
    <original>EVL</original>
    <variation>RGVV</variation>
    <location>
        <begin position="140"/>
        <end position="142"/>
    </location>
</feature>
<feature type="sequence conflict" description="In Ref. 1; AAA03488." evidence="2" ref="1">
    <original>E</original>
    <variation>K</variation>
    <location>
        <position position="268"/>
    </location>
</feature>
<sequence>MTIRLAINGFGRIGRNVLRALYTGHYREQLQVVAINDLGDAAVNAHLFQYDSVHGHFPGEVEHDAESLRVMGDRIAVSAIRNPAELPWKSLGVDIVLECTGLFTSRDKAAAHLQAGAGKVLISAPGKDVEATVVYGVNHEVLRASHRIVSNASCTTNCLAPVAQVLHRELGIEHGLMTTIHAYTNDQNLSDVYHPDLYRARSATQSMIPTKTGAAEAVGLVLPELAGKLTGLAVRVPVINVSLVDLTVQVARDTSVDEVNRLLREASEGSPVLGYNTQPLVSVDFNHDPRSSIFDANHTKVSGRLVKAMAWYDNEWGFSNRMLDSALALAAARD</sequence>
<proteinExistence type="inferred from homology"/>
<gene>
    <name type="primary">gap</name>
    <name type="synonym">hexC</name>
    <name type="ordered locus">PA3195</name>
</gene>
<name>G3P_PSEAE</name>
<organism>
    <name type="scientific">Pseudomonas aeruginosa (strain ATCC 15692 / DSM 22644 / CIP 104116 / JCM 14847 / LMG 12228 / 1C / PRS 101 / PAO1)</name>
    <dbReference type="NCBI Taxonomy" id="208964"/>
    <lineage>
        <taxon>Bacteria</taxon>
        <taxon>Pseudomonadati</taxon>
        <taxon>Pseudomonadota</taxon>
        <taxon>Gammaproteobacteria</taxon>
        <taxon>Pseudomonadales</taxon>
        <taxon>Pseudomonadaceae</taxon>
        <taxon>Pseudomonas</taxon>
    </lineage>
</organism>
<dbReference type="EC" id="1.2.1.12" evidence="1"/>
<dbReference type="EMBL" id="M74256">
    <property type="protein sequence ID" value="AAA03488.1"/>
    <property type="molecule type" value="Unassigned_DNA"/>
</dbReference>
<dbReference type="EMBL" id="AE004091">
    <property type="protein sequence ID" value="AAG06583.1"/>
    <property type="molecule type" value="Genomic_DNA"/>
</dbReference>
<dbReference type="PIR" id="H83246">
    <property type="entry name" value="H83246"/>
</dbReference>
<dbReference type="RefSeq" id="WP_003114837.1">
    <property type="nucleotide sequence ID" value="NZ_QZGE01000019.1"/>
</dbReference>
<dbReference type="SMR" id="P27726"/>
<dbReference type="STRING" id="208964.PA3195"/>
<dbReference type="PaxDb" id="208964-PA3195"/>
<dbReference type="KEGG" id="pae:PA3195"/>
<dbReference type="PATRIC" id="fig|208964.12.peg.3341"/>
<dbReference type="PseudoCAP" id="PA3195"/>
<dbReference type="HOGENOM" id="CLU_030140_0_2_6"/>
<dbReference type="InParanoid" id="P27726"/>
<dbReference type="OrthoDB" id="9803304at2"/>
<dbReference type="PhylomeDB" id="P27726"/>
<dbReference type="BioCyc" id="PAER208964:G1FZ6-3255-MONOMER"/>
<dbReference type="UniPathway" id="UPA00109">
    <property type="reaction ID" value="UER00184"/>
</dbReference>
<dbReference type="Proteomes" id="UP000002438">
    <property type="component" value="Chromosome"/>
</dbReference>
<dbReference type="GO" id="GO:0005829">
    <property type="term" value="C:cytosol"/>
    <property type="evidence" value="ECO:0000318"/>
    <property type="project" value="GO_Central"/>
</dbReference>
<dbReference type="GO" id="GO:0004365">
    <property type="term" value="F:glyceraldehyde-3-phosphate dehydrogenase (NAD+) (phosphorylating) activity"/>
    <property type="evidence" value="ECO:0000250"/>
    <property type="project" value="UniProtKB"/>
</dbReference>
<dbReference type="GO" id="GO:0051287">
    <property type="term" value="F:NAD binding"/>
    <property type="evidence" value="ECO:0000250"/>
    <property type="project" value="UniProtKB"/>
</dbReference>
<dbReference type="GO" id="GO:0050661">
    <property type="term" value="F:NADP binding"/>
    <property type="evidence" value="ECO:0007669"/>
    <property type="project" value="InterPro"/>
</dbReference>
<dbReference type="GO" id="GO:0006006">
    <property type="term" value="P:glucose metabolic process"/>
    <property type="evidence" value="ECO:0000318"/>
    <property type="project" value="GO_Central"/>
</dbReference>
<dbReference type="GO" id="GO:0006096">
    <property type="term" value="P:glycolytic process"/>
    <property type="evidence" value="ECO:0007669"/>
    <property type="project" value="UniProtKB-UniPathway"/>
</dbReference>
<dbReference type="CDD" id="cd18126">
    <property type="entry name" value="GAPDH_I_C"/>
    <property type="match status" value="1"/>
</dbReference>
<dbReference type="CDD" id="cd05214">
    <property type="entry name" value="GAPDH_I_N"/>
    <property type="match status" value="1"/>
</dbReference>
<dbReference type="FunFam" id="3.30.360.10:FF:000002">
    <property type="entry name" value="Glyceraldehyde-3-phosphate dehydrogenase"/>
    <property type="match status" value="1"/>
</dbReference>
<dbReference type="FunFam" id="3.40.50.720:FF:000001">
    <property type="entry name" value="Glyceraldehyde-3-phosphate dehydrogenase"/>
    <property type="match status" value="1"/>
</dbReference>
<dbReference type="Gene3D" id="3.30.360.10">
    <property type="entry name" value="Dihydrodipicolinate Reductase, domain 2"/>
    <property type="match status" value="1"/>
</dbReference>
<dbReference type="Gene3D" id="3.40.50.720">
    <property type="entry name" value="NAD(P)-binding Rossmann-like Domain"/>
    <property type="match status" value="1"/>
</dbReference>
<dbReference type="InterPro" id="IPR020831">
    <property type="entry name" value="GlycerAld/Erythrose_P_DH"/>
</dbReference>
<dbReference type="InterPro" id="IPR020830">
    <property type="entry name" value="GlycerAld_3-P_DH_AS"/>
</dbReference>
<dbReference type="InterPro" id="IPR020829">
    <property type="entry name" value="GlycerAld_3-P_DH_cat"/>
</dbReference>
<dbReference type="InterPro" id="IPR020828">
    <property type="entry name" value="GlycerAld_3-P_DH_NAD(P)-bd"/>
</dbReference>
<dbReference type="InterPro" id="IPR006424">
    <property type="entry name" value="Glyceraldehyde-3-P_DH_1"/>
</dbReference>
<dbReference type="InterPro" id="IPR036291">
    <property type="entry name" value="NAD(P)-bd_dom_sf"/>
</dbReference>
<dbReference type="NCBIfam" id="TIGR01534">
    <property type="entry name" value="GAPDH-I"/>
    <property type="match status" value="1"/>
</dbReference>
<dbReference type="PANTHER" id="PTHR43148">
    <property type="entry name" value="GLYCERALDEHYDE-3-PHOSPHATE DEHYDROGENASE 2"/>
    <property type="match status" value="1"/>
</dbReference>
<dbReference type="Pfam" id="PF02800">
    <property type="entry name" value="Gp_dh_C"/>
    <property type="match status" value="1"/>
</dbReference>
<dbReference type="Pfam" id="PF00044">
    <property type="entry name" value="Gp_dh_N"/>
    <property type="match status" value="1"/>
</dbReference>
<dbReference type="PIRSF" id="PIRSF000149">
    <property type="entry name" value="GAP_DH"/>
    <property type="match status" value="1"/>
</dbReference>
<dbReference type="PRINTS" id="PR00078">
    <property type="entry name" value="G3PDHDRGNASE"/>
</dbReference>
<dbReference type="SMART" id="SM00846">
    <property type="entry name" value="Gp_dh_N"/>
    <property type="match status" value="1"/>
</dbReference>
<dbReference type="SUPFAM" id="SSF55347">
    <property type="entry name" value="Glyceraldehyde-3-phosphate dehydrogenase-like, C-terminal domain"/>
    <property type="match status" value="1"/>
</dbReference>
<dbReference type="SUPFAM" id="SSF51735">
    <property type="entry name" value="NAD(P)-binding Rossmann-fold domains"/>
    <property type="match status" value="1"/>
</dbReference>
<dbReference type="PROSITE" id="PS00071">
    <property type="entry name" value="GAPDH"/>
    <property type="match status" value="1"/>
</dbReference>
<evidence type="ECO:0000250" key="1">
    <source>
        <dbReference type="UniProtKB" id="P0A9B2"/>
    </source>
</evidence>
<evidence type="ECO:0000305" key="2"/>
<protein>
    <recommendedName>
        <fullName evidence="1">Glyceraldehyde-3-phosphate dehydrogenase</fullName>
        <shortName evidence="1">GAPDH</shortName>
        <ecNumber evidence="1">1.2.1.12</ecNumber>
    </recommendedName>
    <alternativeName>
        <fullName evidence="1">NAD-dependent glyceraldehyde-3-phosphate dehydrogenase</fullName>
    </alternativeName>
</protein>
<comment type="function">
    <text evidence="1">Catalyzes the oxidative phosphorylation of glyceraldehyde 3-phosphate (G3P) to 1,3-bisphosphoglycerate (BPG) using the cofactor NAD. The first reaction step involves the formation of a hemiacetal intermediate between G3P and a cysteine residue, and this hemiacetal intermediate is then oxidized to a thioester, with concomitant reduction of NAD to NADH. The reduced NADH is then exchanged with the second NAD, and the thioester is attacked by a nucleophilic inorganic phosphate to produce BPG.</text>
</comment>
<comment type="catalytic activity">
    <reaction evidence="1">
        <text>D-glyceraldehyde 3-phosphate + phosphate + NAD(+) = (2R)-3-phospho-glyceroyl phosphate + NADH + H(+)</text>
        <dbReference type="Rhea" id="RHEA:10300"/>
        <dbReference type="ChEBI" id="CHEBI:15378"/>
        <dbReference type="ChEBI" id="CHEBI:43474"/>
        <dbReference type="ChEBI" id="CHEBI:57540"/>
        <dbReference type="ChEBI" id="CHEBI:57604"/>
        <dbReference type="ChEBI" id="CHEBI:57945"/>
        <dbReference type="ChEBI" id="CHEBI:59776"/>
        <dbReference type="EC" id="1.2.1.12"/>
    </reaction>
</comment>
<comment type="pathway">
    <text evidence="2">Carbohydrate degradation; glycolysis; pyruvate from D-glyceraldehyde 3-phosphate: step 1/5.</text>
</comment>
<comment type="subunit">
    <text evidence="1">Homotetramer.</text>
</comment>
<comment type="subcellular location">
    <subcellularLocation>
        <location evidence="2">Cytoplasm</location>
    </subcellularLocation>
</comment>
<comment type="similarity">
    <text evidence="2">Belongs to the glyceraldehyde-3-phosphate dehydrogenase family.</text>
</comment>
<reference key="1">
    <citation type="journal article" date="1994" name="J. Bacteriol.">
        <title>Two genes for carbohydrate catabolism are divergently transcribed from a region of DNA containing the hexC locus in Pseudomonas aeruginosa PAO1.</title>
        <authorList>
            <person name="Temple L.M."/>
            <person name="Sage A."/>
            <person name="Christie G.E."/>
            <person name="Phibbs P.V. Jr."/>
        </authorList>
    </citation>
    <scope>NUCLEOTIDE SEQUENCE [GENOMIC DNA]</scope>
    <source>
        <strain>ATCC 15692 / DSM 22644 / CIP 104116 / JCM 14847 / LMG 12228 / 1C / PRS 101 / PAO1</strain>
    </source>
</reference>
<reference key="2">
    <citation type="journal article" date="2000" name="Nature">
        <title>Complete genome sequence of Pseudomonas aeruginosa PAO1, an opportunistic pathogen.</title>
        <authorList>
            <person name="Stover C.K."/>
            <person name="Pham X.-Q.T."/>
            <person name="Erwin A.L."/>
            <person name="Mizoguchi S.D."/>
            <person name="Warrener P."/>
            <person name="Hickey M.J."/>
            <person name="Brinkman F.S.L."/>
            <person name="Hufnagle W.O."/>
            <person name="Kowalik D.J."/>
            <person name="Lagrou M."/>
            <person name="Garber R.L."/>
            <person name="Goltry L."/>
            <person name="Tolentino E."/>
            <person name="Westbrock-Wadman S."/>
            <person name="Yuan Y."/>
            <person name="Brody L.L."/>
            <person name="Coulter S.N."/>
            <person name="Folger K.R."/>
            <person name="Kas A."/>
            <person name="Larbig K."/>
            <person name="Lim R.M."/>
            <person name="Smith K.A."/>
            <person name="Spencer D.H."/>
            <person name="Wong G.K.-S."/>
            <person name="Wu Z."/>
            <person name="Paulsen I.T."/>
            <person name="Reizer J."/>
            <person name="Saier M.H. Jr."/>
            <person name="Hancock R.E.W."/>
            <person name="Lory S."/>
            <person name="Olson M.V."/>
        </authorList>
    </citation>
    <scope>NUCLEOTIDE SEQUENCE [LARGE SCALE GENOMIC DNA]</scope>
    <source>
        <strain>ATCC 15692 / DSM 22644 / CIP 104116 / JCM 14847 / LMG 12228 / 1C / PRS 101 / PAO1</strain>
    </source>
</reference>
<accession>P27726</accession>